<feature type="chain" id="PRO_0000262736" description="Bud site selection protein RAX1">
    <location>
        <begin position="1"/>
        <end position="435"/>
    </location>
</feature>
<feature type="topological domain" description="Cytoplasmic" evidence="1">
    <location>
        <begin position="1"/>
        <end position="297"/>
    </location>
</feature>
<feature type="transmembrane region" description="Helical" evidence="1">
    <location>
        <begin position="298"/>
        <end position="318"/>
    </location>
</feature>
<feature type="topological domain" description="Extracellular" evidence="1">
    <location>
        <begin position="319"/>
        <end position="325"/>
    </location>
</feature>
<feature type="transmembrane region" description="Helical" evidence="1">
    <location>
        <begin position="326"/>
        <end position="346"/>
    </location>
</feature>
<feature type="topological domain" description="Cytoplasmic" evidence="1">
    <location>
        <begin position="347"/>
        <end position="409"/>
    </location>
</feature>
<feature type="transmembrane region" description="Helical" evidence="1">
    <location>
        <begin position="410"/>
        <end position="430"/>
    </location>
</feature>
<feature type="topological domain" description="Extracellular" evidence="1">
    <location>
        <begin position="431"/>
        <end position="435"/>
    </location>
</feature>
<feature type="domain" description="RGS" evidence="2">
    <location>
        <begin position="159"/>
        <end position="248"/>
    </location>
</feature>
<feature type="modified residue" description="Phosphoserine" evidence="8">
    <location>
        <position position="167"/>
    </location>
</feature>
<evidence type="ECO:0000255" key="1"/>
<evidence type="ECO:0000255" key="2">
    <source>
        <dbReference type="PROSITE-ProRule" id="PRU00171"/>
    </source>
</evidence>
<evidence type="ECO:0000269" key="3">
    <source>
    </source>
</evidence>
<evidence type="ECO:0000269" key="4">
    <source>
    </source>
</evidence>
<evidence type="ECO:0000269" key="5">
    <source>
    </source>
</evidence>
<evidence type="ECO:0000269" key="6">
    <source>
    </source>
</evidence>
<evidence type="ECO:0000303" key="7">
    <source>
    </source>
</evidence>
<evidence type="ECO:0007744" key="8">
    <source>
    </source>
</evidence>
<gene>
    <name evidence="7" type="primary">RAX1</name>
    <name type="ordered locus">YOR301W</name>
</gene>
<accession>Q08760</accession>
<accession>D6W300</accession>
<name>RAX1_YEAST</name>
<organism>
    <name type="scientific">Saccharomyces cerevisiae (strain ATCC 204508 / S288c)</name>
    <name type="common">Baker's yeast</name>
    <dbReference type="NCBI Taxonomy" id="559292"/>
    <lineage>
        <taxon>Eukaryota</taxon>
        <taxon>Fungi</taxon>
        <taxon>Dikarya</taxon>
        <taxon>Ascomycota</taxon>
        <taxon>Saccharomycotina</taxon>
        <taxon>Saccharomycetes</taxon>
        <taxon>Saccharomycetales</taxon>
        <taxon>Saccharomycetaceae</taxon>
        <taxon>Saccharomyces</taxon>
    </lineage>
</organism>
<proteinExistence type="evidence at protein level"/>
<reference key="1">
    <citation type="journal article" date="1997" name="Yeast">
        <title>Sequence and analysis of a 36.2 kb fragment from the right arm of yeast chromosome XV reveals 19 open reading frames including SNF2 (5' end), CPA1, SLY41, a putative transport ATPase, a putative ribosomal protein and an SNF2 homologue.</title>
        <authorList>
            <person name="Poirey R."/>
            <person name="Cziepluch C."/>
            <person name="Tobiasch E."/>
            <person name="Pujol A."/>
            <person name="Kordes E."/>
            <person name="Jauniaux J.-C."/>
        </authorList>
    </citation>
    <scope>NUCLEOTIDE SEQUENCE [GENOMIC DNA]</scope>
</reference>
<reference key="2">
    <citation type="journal article" date="1997" name="Nature">
        <title>The nucleotide sequence of Saccharomyces cerevisiae chromosome XV.</title>
        <authorList>
            <person name="Dujon B."/>
            <person name="Albermann K."/>
            <person name="Aldea M."/>
            <person name="Alexandraki D."/>
            <person name="Ansorge W."/>
            <person name="Arino J."/>
            <person name="Benes V."/>
            <person name="Bohn C."/>
            <person name="Bolotin-Fukuhara M."/>
            <person name="Bordonne R."/>
            <person name="Boyer J."/>
            <person name="Camasses A."/>
            <person name="Casamayor A."/>
            <person name="Casas C."/>
            <person name="Cheret G."/>
            <person name="Cziepluch C."/>
            <person name="Daignan-Fornier B."/>
            <person name="Dang V.-D."/>
            <person name="de Haan M."/>
            <person name="Delius H."/>
            <person name="Durand P."/>
            <person name="Fairhead C."/>
            <person name="Feldmann H."/>
            <person name="Gaillon L."/>
            <person name="Galisson F."/>
            <person name="Gamo F.-J."/>
            <person name="Gancedo C."/>
            <person name="Goffeau A."/>
            <person name="Goulding S.E."/>
            <person name="Grivell L.A."/>
            <person name="Habbig B."/>
            <person name="Hand N.J."/>
            <person name="Hani J."/>
            <person name="Hattenhorst U."/>
            <person name="Hebling U."/>
            <person name="Hernando Y."/>
            <person name="Herrero E."/>
            <person name="Heumann K."/>
            <person name="Hiesel R."/>
            <person name="Hilger F."/>
            <person name="Hofmann B."/>
            <person name="Hollenberg C.P."/>
            <person name="Hughes B."/>
            <person name="Jauniaux J.-C."/>
            <person name="Kalogeropoulos A."/>
            <person name="Katsoulou C."/>
            <person name="Kordes E."/>
            <person name="Lafuente M.J."/>
            <person name="Landt O."/>
            <person name="Louis E.J."/>
            <person name="Maarse A.C."/>
            <person name="Madania A."/>
            <person name="Mannhaupt G."/>
            <person name="Marck C."/>
            <person name="Martin R.P."/>
            <person name="Mewes H.-W."/>
            <person name="Michaux G."/>
            <person name="Paces V."/>
            <person name="Parle-McDermott A.G."/>
            <person name="Pearson B.M."/>
            <person name="Perrin A."/>
            <person name="Pettersson B."/>
            <person name="Poch O."/>
            <person name="Pohl T.M."/>
            <person name="Poirey R."/>
            <person name="Portetelle D."/>
            <person name="Pujol A."/>
            <person name="Purnelle B."/>
            <person name="Ramezani Rad M."/>
            <person name="Rechmann S."/>
            <person name="Schwager C."/>
            <person name="Schweizer M."/>
            <person name="Sor F."/>
            <person name="Sterky F."/>
            <person name="Tarassov I.A."/>
            <person name="Teodoru C."/>
            <person name="Tettelin H."/>
            <person name="Thierry A."/>
            <person name="Tobiasch E."/>
            <person name="Tzermia M."/>
            <person name="Uhlen M."/>
            <person name="Unseld M."/>
            <person name="Valens M."/>
            <person name="Vandenbol M."/>
            <person name="Vetter I."/>
            <person name="Vlcek C."/>
            <person name="Voet M."/>
            <person name="Volckaert G."/>
            <person name="Voss H."/>
            <person name="Wambutt R."/>
            <person name="Wedler H."/>
            <person name="Wiemann S."/>
            <person name="Winsor B."/>
            <person name="Wolfe K.H."/>
            <person name="Zollner A."/>
            <person name="Zumstein E."/>
            <person name="Kleine K."/>
        </authorList>
    </citation>
    <scope>NUCLEOTIDE SEQUENCE [LARGE SCALE GENOMIC DNA]</scope>
    <source>
        <strain>ATCC 204508 / S288c</strain>
    </source>
</reference>
<reference key="3">
    <citation type="journal article" date="2014" name="G3 (Bethesda)">
        <title>The reference genome sequence of Saccharomyces cerevisiae: Then and now.</title>
        <authorList>
            <person name="Engel S.R."/>
            <person name="Dietrich F.S."/>
            <person name="Fisk D.G."/>
            <person name="Binkley G."/>
            <person name="Balakrishnan R."/>
            <person name="Costanzo M.C."/>
            <person name="Dwight S.S."/>
            <person name="Hitz B.C."/>
            <person name="Karra K."/>
            <person name="Nash R.S."/>
            <person name="Weng S."/>
            <person name="Wong E.D."/>
            <person name="Lloyd P."/>
            <person name="Skrzypek M.S."/>
            <person name="Miyasato S.R."/>
            <person name="Simison M."/>
            <person name="Cherry J.M."/>
        </authorList>
    </citation>
    <scope>GENOME REANNOTATION</scope>
    <source>
        <strain>ATCC 204508 / S288c</strain>
    </source>
</reference>
<reference key="4">
    <citation type="journal article" date="2004" name="Gene">
        <title>Rax1, a protein required for the establishment of the bipolar budding pattern in yeast.</title>
        <authorList>
            <person name="Fujita A."/>
            <person name="Lord M."/>
            <person name="Hiroko T."/>
            <person name="Hiroko F."/>
            <person name="Chen T."/>
            <person name="Oka C."/>
            <person name="Misumi Y."/>
            <person name="Chant J."/>
        </authorList>
    </citation>
    <scope>FUNCTION</scope>
    <scope>SUBCELLULAR LOCATION</scope>
</reference>
<reference key="5">
    <citation type="journal article" date="2004" name="Mol. Biol. Cell">
        <title>Interactions among Rax1p, Rax2p, Bud8p, and Bud9p in marking cortical sites for bipolar bud-site selection in yeast.</title>
        <authorList>
            <person name="Kang P.J."/>
            <person name="Angerman E."/>
            <person name="Nakashima K."/>
            <person name="Pringle J.R."/>
            <person name="Park H.-O."/>
        </authorList>
    </citation>
    <scope>INTERACTION WITH BUD8; BUD9 AND RAX2</scope>
    <scope>SUBCELLULAR LOCATION</scope>
</reference>
<reference key="6">
    <citation type="journal article" date="2006" name="Proc. Natl. Acad. Sci. U.S.A.">
        <title>A global topology map of the Saccharomyces cerevisiae membrane proteome.</title>
        <authorList>
            <person name="Kim H."/>
            <person name="Melen K."/>
            <person name="Oesterberg M."/>
            <person name="von Heijne G."/>
        </authorList>
    </citation>
    <scope>TOPOLOGY [LARGE SCALE ANALYSIS]</scope>
</reference>
<reference key="7">
    <citation type="journal article" date="2007" name="Proc. Natl. Acad. Sci. U.S.A.">
        <title>Analysis of phosphorylation sites on proteins from Saccharomyces cerevisiae by electron transfer dissociation (ETD) mass spectrometry.</title>
        <authorList>
            <person name="Chi A."/>
            <person name="Huttenhower C."/>
            <person name="Geer L.Y."/>
            <person name="Coon J.J."/>
            <person name="Syka J.E.P."/>
            <person name="Bai D.L."/>
            <person name="Shabanowitz J."/>
            <person name="Burke D.J."/>
            <person name="Troyanskaya O.G."/>
            <person name="Hunt D.F."/>
        </authorList>
    </citation>
    <scope>PHOSPHORYLATION [LARGE SCALE ANALYSIS] AT SER-167</scope>
    <scope>IDENTIFICATION BY MASS SPECTROMETRY [LARGE SCALE ANALYSIS]</scope>
</reference>
<reference key="8">
    <citation type="journal article" date="2008" name="Mol. Cell. Proteomics">
        <title>A multidimensional chromatography technology for in-depth phosphoproteome analysis.</title>
        <authorList>
            <person name="Albuquerque C.P."/>
            <person name="Smolka M.B."/>
            <person name="Payne S.H."/>
            <person name="Bafna V."/>
            <person name="Eng J."/>
            <person name="Zhou H."/>
        </authorList>
    </citation>
    <scope>IDENTIFICATION BY MASS SPECTROMETRY [LARGE SCALE ANALYSIS]</scope>
</reference>
<reference key="9">
    <citation type="journal article" date="2009" name="Science">
        <title>Global analysis of Cdk1 substrate phosphorylation sites provides insights into evolution.</title>
        <authorList>
            <person name="Holt L.J."/>
            <person name="Tuch B.B."/>
            <person name="Villen J."/>
            <person name="Johnson A.D."/>
            <person name="Gygi S.P."/>
            <person name="Morgan D.O."/>
        </authorList>
    </citation>
    <scope>IDENTIFICATION BY MASS SPECTROMETRY [LARGE SCALE ANALYSIS]</scope>
</reference>
<reference key="10">
    <citation type="journal article" date="2010" name="Biochem. Biophys. Res. Commun.">
        <title>Subcellular localization of the interaction of bipolar landmarks Bud8p and Bud9p with Rax2p in Saccharomyces cerevisiae diploid cells.</title>
        <authorList>
            <person name="Kato Y."/>
            <person name="Kawasaki H."/>
            <person name="Arakawa N."/>
            <person name="Hirano H."/>
        </authorList>
    </citation>
    <scope>FUNCTION</scope>
    <scope>INTERACTION WITH BUD8 AND BUD9</scope>
    <scope>SUBCELLULAR LOCATION</scope>
</reference>
<reference key="11">
    <citation type="journal article" date="2020" name="Proc. Natl. Acad. Sci. U.S.A.">
        <title>Mitotic and pheromone-specific intrinsic polarization cues interfere with gradient sensing in Saccharomyces cerevisiae.</title>
        <authorList>
            <person name="Vasen G."/>
            <person name="Dunayevich P."/>
            <person name="Colman-Lerner A."/>
        </authorList>
    </citation>
    <scope>FUNCTION</scope>
</reference>
<sequence>MKEELSKVSSMQNFEMIQRERLPTLYEVLIQRTSQPVDLWTFYTFLSQFPYAINYLDFWVDLMTHTRLCKNYIELVRKSLINFPQEQQQNGSTSTATFDLLNALIEEGHLDPEAPDKLLENSGPDVPFSPKLNELLGDWKHQSGIGQEALRNEDVALIVDEIMKRRSQQDGKPQITTKQLLHSAVGLCNTYLVSPEQSERYLSNIPMETRNRIIESVQIERKYDIEIFDDLKNLTYQFLEMDCFPKFLSRVALHNIHDEISDWRFHSVGVTNEKSNRSRGQTHISRSPFSNHTSISRIGFGLLWLGIGFWIGYVLIFLAYSRAIRVVTVVPFTLGCYCIVCGMYQVDIVYSWFGVTQRLLHRHKNAGNDEGDASSDTDHVPMILAVFGGRRRLTRIEHPFTRQLLRKRGLWCLLLVVGATAAFTVIFSCVPGRRV</sequence>
<comment type="function">
    <text evidence="3 5 6">Required for the establishment of the bipolar budding pattern (PubMed:14980713). Involved in selecting bud sites at both the distal and proximal poles of daughter cells as well as near previously used division sites on mother cells (PubMed:14980713). The RAX1-RAX2 complex performs the asymmetric localization of the two cortical landmarks, BUD8 and BUD9, at the distal and proximal poles, respectively (PubMed:14980713, PubMed:20678480, PubMed:32152126).</text>
</comment>
<comment type="subunit">
    <text evidence="4">Forms an heterodimeric complex with RAX2 (PubMed:15356260). Also interacts with BUD8 and BUD9 (PubMed:15356260).</text>
</comment>
<comment type="subcellular location">
    <subcellularLocation>
        <location evidence="3 4">Cell membrane</location>
        <topology>Multi-pass membrane protein</topology>
    </subcellularLocation>
    <subcellularLocation>
        <location evidence="4">Bud neck</location>
    </subcellularLocation>
    <subcellularLocation>
        <location evidence="4">Bud tip</location>
    </subcellularLocation>
    <text evidence="3 4">Before cytokinesis, RAX1 concentrates as a ring at the mother-bud neck and to the tip of the bud. The RAX1 ring splits at cytokinesis, endowing each progeny cell with a RAX1 ring and additional RAX1 localization at the distal bud pole of the newborn daughter cell. The rings persist at the cell cortex for several generations, giving rise to cells decorated by multiple rings.</text>
</comment>
<keyword id="KW-0131">Cell cycle</keyword>
<keyword id="KW-0132">Cell division</keyword>
<keyword id="KW-1003">Cell membrane</keyword>
<keyword id="KW-0472">Membrane</keyword>
<keyword id="KW-0597">Phosphoprotein</keyword>
<keyword id="KW-1185">Reference proteome</keyword>
<keyword id="KW-0812">Transmembrane</keyword>
<keyword id="KW-1133">Transmembrane helix</keyword>
<dbReference type="EMBL" id="Z75209">
    <property type="protein sequence ID" value="CAA99619.1"/>
    <property type="molecule type" value="Genomic_DNA"/>
</dbReference>
<dbReference type="EMBL" id="BK006948">
    <property type="protein sequence ID" value="DAA11066.1"/>
    <property type="molecule type" value="Genomic_DNA"/>
</dbReference>
<dbReference type="PIR" id="S67205">
    <property type="entry name" value="S67205"/>
</dbReference>
<dbReference type="RefSeq" id="NP_014945.3">
    <property type="nucleotide sequence ID" value="NM_001183720.3"/>
</dbReference>
<dbReference type="BioGRID" id="34689">
    <property type="interactions" value="85"/>
</dbReference>
<dbReference type="FunCoup" id="Q08760">
    <property type="interactions" value="46"/>
</dbReference>
<dbReference type="IntAct" id="Q08760">
    <property type="interactions" value="4"/>
</dbReference>
<dbReference type="MINT" id="Q08760"/>
<dbReference type="STRING" id="4932.YOR301W"/>
<dbReference type="iPTMnet" id="Q08760"/>
<dbReference type="PaxDb" id="4932-YOR301W"/>
<dbReference type="PeptideAtlas" id="Q08760"/>
<dbReference type="EnsemblFungi" id="YOR301W_mRNA">
    <property type="protein sequence ID" value="YOR301W"/>
    <property type="gene ID" value="YOR301W"/>
</dbReference>
<dbReference type="GeneID" id="854477"/>
<dbReference type="KEGG" id="sce:YOR301W"/>
<dbReference type="AGR" id="SGD:S000005827"/>
<dbReference type="SGD" id="S000005827">
    <property type="gene designation" value="RAX1"/>
</dbReference>
<dbReference type="VEuPathDB" id="FungiDB:YOR301W"/>
<dbReference type="eggNOG" id="ENOG502QRI8">
    <property type="taxonomic scope" value="Eukaryota"/>
</dbReference>
<dbReference type="GeneTree" id="ENSGT00390000015077"/>
<dbReference type="HOGENOM" id="CLU_029881_1_1_1"/>
<dbReference type="InParanoid" id="Q08760"/>
<dbReference type="OMA" id="VYSWFGV"/>
<dbReference type="OrthoDB" id="5584247at2759"/>
<dbReference type="BioCyc" id="YEAST:G3O-33785-MONOMER"/>
<dbReference type="Reactome" id="R-SCE-983231">
    <property type="pathway name" value="Factors involved in megakaryocyte development and platelet production"/>
</dbReference>
<dbReference type="BioGRID-ORCS" id="854477">
    <property type="hits" value="1 hit in 10 CRISPR screens"/>
</dbReference>
<dbReference type="PRO" id="PR:Q08760"/>
<dbReference type="Proteomes" id="UP000002311">
    <property type="component" value="Chromosome XV"/>
</dbReference>
<dbReference type="RNAct" id="Q08760">
    <property type="molecule type" value="protein"/>
</dbReference>
<dbReference type="GO" id="GO:0005935">
    <property type="term" value="C:cellular bud neck"/>
    <property type="evidence" value="ECO:0000314"/>
    <property type="project" value="SGD"/>
</dbReference>
<dbReference type="GO" id="GO:0005621">
    <property type="term" value="C:cellular bud scar"/>
    <property type="evidence" value="ECO:0000314"/>
    <property type="project" value="SGD"/>
</dbReference>
<dbReference type="GO" id="GO:0005934">
    <property type="term" value="C:cellular bud tip"/>
    <property type="evidence" value="ECO:0007669"/>
    <property type="project" value="UniProtKB-SubCell"/>
</dbReference>
<dbReference type="GO" id="GO:0000324">
    <property type="term" value="C:fungal-type vacuole"/>
    <property type="evidence" value="ECO:0007005"/>
    <property type="project" value="SGD"/>
</dbReference>
<dbReference type="GO" id="GO:0005886">
    <property type="term" value="C:plasma membrane"/>
    <property type="evidence" value="ECO:0000318"/>
    <property type="project" value="GO_Central"/>
</dbReference>
<dbReference type="GO" id="GO:0007120">
    <property type="term" value="P:axial cellular bud site selection"/>
    <property type="evidence" value="ECO:0000315"/>
    <property type="project" value="SGD"/>
</dbReference>
<dbReference type="GO" id="GO:0007121">
    <property type="term" value="P:bipolar cellular bud site selection"/>
    <property type="evidence" value="ECO:0000315"/>
    <property type="project" value="SGD"/>
</dbReference>
<dbReference type="GO" id="GO:0008104">
    <property type="term" value="P:protein localization"/>
    <property type="evidence" value="ECO:0000315"/>
    <property type="project" value="SGD"/>
</dbReference>
<dbReference type="Gene3D" id="1.10.167.10">
    <property type="entry name" value="Regulator of G-protein Signalling 4, domain 2"/>
    <property type="match status" value="1"/>
</dbReference>
<dbReference type="InterPro" id="IPR052246">
    <property type="entry name" value="Cell_Polariz_PKAAnc"/>
</dbReference>
<dbReference type="InterPro" id="IPR016137">
    <property type="entry name" value="RGS"/>
</dbReference>
<dbReference type="InterPro" id="IPR036305">
    <property type="entry name" value="RGS_sf"/>
</dbReference>
<dbReference type="InterPro" id="IPR044926">
    <property type="entry name" value="RGS_subdomain_2"/>
</dbReference>
<dbReference type="PANTHER" id="PTHR13155:SF1">
    <property type="entry name" value="A-KINASE ANCHOR PROTEIN 10, MITOCHONDRIAL"/>
    <property type="match status" value="1"/>
</dbReference>
<dbReference type="PANTHER" id="PTHR13155">
    <property type="entry name" value="A-KINASE ANCHOR PROTEINS"/>
    <property type="match status" value="1"/>
</dbReference>
<dbReference type="SMART" id="SM00315">
    <property type="entry name" value="RGS"/>
    <property type="match status" value="1"/>
</dbReference>
<dbReference type="SUPFAM" id="SSF48097">
    <property type="entry name" value="Regulator of G-protein signaling, RGS"/>
    <property type="match status" value="1"/>
</dbReference>
<protein>
    <recommendedName>
        <fullName evidence="7">Bud site selection protein RAX1</fullName>
    </recommendedName>
    <alternativeName>
        <fullName evidence="7">Revert to axial protein 1</fullName>
    </alternativeName>
</protein>